<dbReference type="EMBL" id="AE016830">
    <property type="protein sequence ID" value="AAO81099.1"/>
    <property type="molecule type" value="Genomic_DNA"/>
</dbReference>
<dbReference type="RefSeq" id="NP_815029.1">
    <property type="nucleotide sequence ID" value="NC_004668.1"/>
</dbReference>
<dbReference type="RefSeq" id="WP_002357827.1">
    <property type="nucleotide sequence ID" value="NZ_KE136528.1"/>
</dbReference>
<dbReference type="SMR" id="Q835R8"/>
<dbReference type="STRING" id="226185.EF_1307"/>
<dbReference type="DNASU" id="1200204"/>
<dbReference type="EnsemblBacteria" id="AAO81099">
    <property type="protein sequence ID" value="AAO81099"/>
    <property type="gene ID" value="EF_1307"/>
</dbReference>
<dbReference type="GeneID" id="60893690"/>
<dbReference type="KEGG" id="efa:EF1307"/>
<dbReference type="PATRIC" id="fig|226185.45.peg.2194"/>
<dbReference type="eggNOG" id="COG0576">
    <property type="taxonomic scope" value="Bacteria"/>
</dbReference>
<dbReference type="HOGENOM" id="CLU_057217_6_3_9"/>
<dbReference type="Proteomes" id="UP000001415">
    <property type="component" value="Chromosome"/>
</dbReference>
<dbReference type="GO" id="GO:0005737">
    <property type="term" value="C:cytoplasm"/>
    <property type="evidence" value="ECO:0007669"/>
    <property type="project" value="UniProtKB-SubCell"/>
</dbReference>
<dbReference type="GO" id="GO:0000774">
    <property type="term" value="F:adenyl-nucleotide exchange factor activity"/>
    <property type="evidence" value="ECO:0007669"/>
    <property type="project" value="InterPro"/>
</dbReference>
<dbReference type="GO" id="GO:0042803">
    <property type="term" value="F:protein homodimerization activity"/>
    <property type="evidence" value="ECO:0007669"/>
    <property type="project" value="InterPro"/>
</dbReference>
<dbReference type="GO" id="GO:0051087">
    <property type="term" value="F:protein-folding chaperone binding"/>
    <property type="evidence" value="ECO:0007669"/>
    <property type="project" value="InterPro"/>
</dbReference>
<dbReference type="GO" id="GO:0051082">
    <property type="term" value="F:unfolded protein binding"/>
    <property type="evidence" value="ECO:0007669"/>
    <property type="project" value="TreeGrafter"/>
</dbReference>
<dbReference type="GO" id="GO:0006457">
    <property type="term" value="P:protein folding"/>
    <property type="evidence" value="ECO:0007669"/>
    <property type="project" value="InterPro"/>
</dbReference>
<dbReference type="CDD" id="cd00446">
    <property type="entry name" value="GrpE"/>
    <property type="match status" value="1"/>
</dbReference>
<dbReference type="FunFam" id="2.30.22.10:FF:000001">
    <property type="entry name" value="Protein GrpE"/>
    <property type="match status" value="1"/>
</dbReference>
<dbReference type="Gene3D" id="3.90.20.20">
    <property type="match status" value="1"/>
</dbReference>
<dbReference type="Gene3D" id="2.30.22.10">
    <property type="entry name" value="Head domain of nucleotide exchange factor GrpE"/>
    <property type="match status" value="1"/>
</dbReference>
<dbReference type="HAMAP" id="MF_01151">
    <property type="entry name" value="GrpE"/>
    <property type="match status" value="1"/>
</dbReference>
<dbReference type="InterPro" id="IPR000740">
    <property type="entry name" value="GrpE"/>
</dbReference>
<dbReference type="InterPro" id="IPR013805">
    <property type="entry name" value="GrpE_coiled_coil"/>
</dbReference>
<dbReference type="InterPro" id="IPR009012">
    <property type="entry name" value="GrpE_head"/>
</dbReference>
<dbReference type="NCBIfam" id="NF010738">
    <property type="entry name" value="PRK14140.1"/>
    <property type="match status" value="1"/>
</dbReference>
<dbReference type="NCBIfam" id="NF010753">
    <property type="entry name" value="PRK14156.1"/>
    <property type="match status" value="1"/>
</dbReference>
<dbReference type="NCBIfam" id="NF010759">
    <property type="entry name" value="PRK14162.1"/>
    <property type="match status" value="1"/>
</dbReference>
<dbReference type="PANTHER" id="PTHR21237">
    <property type="entry name" value="GRPE PROTEIN"/>
    <property type="match status" value="1"/>
</dbReference>
<dbReference type="PANTHER" id="PTHR21237:SF23">
    <property type="entry name" value="GRPE PROTEIN HOMOLOG, MITOCHONDRIAL"/>
    <property type="match status" value="1"/>
</dbReference>
<dbReference type="Pfam" id="PF01025">
    <property type="entry name" value="GrpE"/>
    <property type="match status" value="1"/>
</dbReference>
<dbReference type="PRINTS" id="PR00773">
    <property type="entry name" value="GRPEPROTEIN"/>
</dbReference>
<dbReference type="SUPFAM" id="SSF58014">
    <property type="entry name" value="Coiled-coil domain of nucleotide exchange factor GrpE"/>
    <property type="match status" value="1"/>
</dbReference>
<dbReference type="SUPFAM" id="SSF51064">
    <property type="entry name" value="Head domain of nucleotide exchange factor GrpE"/>
    <property type="match status" value="1"/>
</dbReference>
<dbReference type="PROSITE" id="PS01071">
    <property type="entry name" value="GRPE"/>
    <property type="match status" value="1"/>
</dbReference>
<proteinExistence type="inferred from homology"/>
<organism>
    <name type="scientific">Enterococcus faecalis (strain ATCC 700802 / V583)</name>
    <dbReference type="NCBI Taxonomy" id="226185"/>
    <lineage>
        <taxon>Bacteria</taxon>
        <taxon>Bacillati</taxon>
        <taxon>Bacillota</taxon>
        <taxon>Bacilli</taxon>
        <taxon>Lactobacillales</taxon>
        <taxon>Enterococcaceae</taxon>
        <taxon>Enterococcus</taxon>
    </lineage>
</organism>
<accession>Q835R8</accession>
<reference key="1">
    <citation type="journal article" date="2003" name="Science">
        <title>Role of mobile DNA in the evolution of vancomycin-resistant Enterococcus faecalis.</title>
        <authorList>
            <person name="Paulsen I.T."/>
            <person name="Banerjei L."/>
            <person name="Myers G.S.A."/>
            <person name="Nelson K.E."/>
            <person name="Seshadri R."/>
            <person name="Read T.D."/>
            <person name="Fouts D.E."/>
            <person name="Eisen J.A."/>
            <person name="Gill S.R."/>
            <person name="Heidelberg J.F."/>
            <person name="Tettelin H."/>
            <person name="Dodson R.J."/>
            <person name="Umayam L.A."/>
            <person name="Brinkac L.M."/>
            <person name="Beanan M.J."/>
            <person name="Daugherty S.C."/>
            <person name="DeBoy R.T."/>
            <person name="Durkin S.A."/>
            <person name="Kolonay J.F."/>
            <person name="Madupu R."/>
            <person name="Nelson W.C."/>
            <person name="Vamathevan J.J."/>
            <person name="Tran B."/>
            <person name="Upton J."/>
            <person name="Hansen T."/>
            <person name="Shetty J."/>
            <person name="Khouri H.M."/>
            <person name="Utterback T.R."/>
            <person name="Radune D."/>
            <person name="Ketchum K.A."/>
            <person name="Dougherty B.A."/>
            <person name="Fraser C.M."/>
        </authorList>
    </citation>
    <scope>NUCLEOTIDE SEQUENCE [LARGE SCALE GENOMIC DNA]</scope>
    <source>
        <strain>ATCC 700802 / V583</strain>
    </source>
</reference>
<comment type="function">
    <text evidence="1">Participates actively in the response to hyperosmotic and heat shock by preventing the aggregation of stress-denatured proteins, in association with DnaK and GrpE. It is the nucleotide exchange factor for DnaK and may function as a thermosensor. Unfolded proteins bind initially to DnaJ; upon interaction with the DnaJ-bound protein, DnaK hydrolyzes its bound ATP, resulting in the formation of a stable complex. GrpE releases ADP from DnaK; ATP binding to DnaK triggers the release of the substrate protein, thus completing the reaction cycle. Several rounds of ATP-dependent interactions between DnaJ, DnaK and GrpE are required for fully efficient folding.</text>
</comment>
<comment type="subunit">
    <text evidence="1">Homodimer.</text>
</comment>
<comment type="subcellular location">
    <subcellularLocation>
        <location evidence="1">Cytoplasm</location>
    </subcellularLocation>
</comment>
<comment type="similarity">
    <text evidence="1">Belongs to the GrpE family.</text>
</comment>
<name>GRPE_ENTFA</name>
<feature type="chain" id="PRO_0000113785" description="Protein GrpE">
    <location>
        <begin position="1"/>
        <end position="179"/>
    </location>
</feature>
<feature type="region of interest" description="Disordered" evidence="2">
    <location>
        <begin position="1"/>
        <end position="23"/>
    </location>
</feature>
<feature type="compositionally biased region" description="Basic and acidic residues" evidence="2">
    <location>
        <begin position="1"/>
        <end position="10"/>
    </location>
</feature>
<gene>
    <name evidence="1" type="primary">grpE</name>
    <name type="ordered locus">EF_1307</name>
</gene>
<evidence type="ECO:0000255" key="1">
    <source>
        <dbReference type="HAMAP-Rule" id="MF_01151"/>
    </source>
</evidence>
<evidence type="ECO:0000256" key="2">
    <source>
        <dbReference type="SAM" id="MobiDB-lite"/>
    </source>
</evidence>
<protein>
    <recommendedName>
        <fullName evidence="1">Protein GrpE</fullName>
    </recommendedName>
    <alternativeName>
        <fullName evidence="1">HSP-70 cofactor</fullName>
    </alternativeName>
</protein>
<keyword id="KW-0143">Chaperone</keyword>
<keyword id="KW-0963">Cytoplasm</keyword>
<keyword id="KW-1185">Reference proteome</keyword>
<keyword id="KW-0346">Stress response</keyword>
<sequence>MSKKEEKQEELQEEMEAVDAAGVSEVEVEATEIENLKAELSEMEDKFLRARAEIANMSNRNKNERELLVRYRSQDLGKKILPSIDNLERAMAIEVSDEQGESLKKGISMVLESITVALKEEGIEEIPAMGETFDPNLHQAVQTVPASEETPADTIVEVLQKGYKLQDRVLRPSMVIVAQ</sequence>